<evidence type="ECO:0000255" key="1">
    <source>
        <dbReference type="PROSITE-ProRule" id="PRU00108"/>
    </source>
</evidence>
<evidence type="ECO:0000305" key="2"/>
<organism>
    <name type="scientific">Myxine glutinosa</name>
    <name type="common">Atlantic hagfish</name>
    <dbReference type="NCBI Taxonomy" id="7769"/>
    <lineage>
        <taxon>Eukaryota</taxon>
        <taxon>Metazoa</taxon>
        <taxon>Chordata</taxon>
        <taxon>Craniata</taxon>
        <taxon>Vertebrata</taxon>
        <taxon>Cyclostomata</taxon>
        <taxon>Myxini</taxon>
        <taxon>Myxiniformes</taxon>
        <taxon>Myxinidae</taxon>
        <taxon>Myxininae</taxon>
        <taxon>Myxine</taxon>
    </lineage>
</organism>
<sequence length="60" mass="7076">ADQLARLRAEFQANRYLTEERRQNLARELSLNEAQIKIWFQNKRAKIKKASGVKNTLALY</sequence>
<protein>
    <recommendedName>
        <fullName>Homeobox protein engrailed-like A</fullName>
        <shortName>EN-A</shortName>
    </recommendedName>
</protein>
<comment type="subcellular location">
    <subcellularLocation>
        <location evidence="2">Nucleus</location>
    </subcellularLocation>
</comment>
<comment type="similarity">
    <text evidence="2">Belongs to the engrailed homeobox family.</text>
</comment>
<reference key="1">
    <citation type="journal article" date="1990" name="FEBS Lett.">
        <title>Conservation of engrailed-like homeobox sequences during vertebrate evolution.</title>
        <authorList>
            <person name="Holland P.W.H."/>
            <person name="Williams N.A."/>
        </authorList>
    </citation>
    <scope>NUCLEOTIDE SEQUENCE [GENOMIC DNA]</scope>
    <source>
        <tissue>Muscle</tissue>
    </source>
</reference>
<accession>P31535</accession>
<feature type="chain" id="PRO_0000196087" description="Homeobox protein engrailed-like A">
    <location>
        <begin position="1" status="less than"/>
        <end position="60" status="greater than"/>
    </location>
</feature>
<feature type="DNA-binding region" description="Homeobox" evidence="1">
    <location>
        <begin position="1" status="less than"/>
        <end position="41"/>
    </location>
</feature>
<feature type="non-terminal residue">
    <location>
        <position position="1"/>
    </location>
</feature>
<feature type="non-terminal residue">
    <location>
        <position position="60"/>
    </location>
</feature>
<name>HMENA_MYXGL</name>
<dbReference type="EMBL" id="X59120">
    <property type="protein sequence ID" value="CAA41843.1"/>
    <property type="molecule type" value="Genomic_DNA"/>
</dbReference>
<dbReference type="PIR" id="S13013">
    <property type="entry name" value="S13013"/>
</dbReference>
<dbReference type="SMR" id="P31535"/>
<dbReference type="GO" id="GO:0005634">
    <property type="term" value="C:nucleus"/>
    <property type="evidence" value="ECO:0007669"/>
    <property type="project" value="UniProtKB-SubCell"/>
</dbReference>
<dbReference type="GO" id="GO:0000981">
    <property type="term" value="F:DNA-binding transcription factor activity, RNA polymerase II-specific"/>
    <property type="evidence" value="ECO:0007669"/>
    <property type="project" value="InterPro"/>
</dbReference>
<dbReference type="GO" id="GO:0000978">
    <property type="term" value="F:RNA polymerase II cis-regulatory region sequence-specific DNA binding"/>
    <property type="evidence" value="ECO:0007669"/>
    <property type="project" value="TreeGrafter"/>
</dbReference>
<dbReference type="GO" id="GO:0030182">
    <property type="term" value="P:neuron differentiation"/>
    <property type="evidence" value="ECO:0007669"/>
    <property type="project" value="TreeGrafter"/>
</dbReference>
<dbReference type="CDD" id="cd00086">
    <property type="entry name" value="homeodomain"/>
    <property type="match status" value="1"/>
</dbReference>
<dbReference type="Gene3D" id="1.10.10.60">
    <property type="entry name" value="Homeodomain-like"/>
    <property type="match status" value="1"/>
</dbReference>
<dbReference type="InterPro" id="IPR050720">
    <property type="entry name" value="Engrailed_Homeobox_TFs"/>
</dbReference>
<dbReference type="InterPro" id="IPR001356">
    <property type="entry name" value="HD"/>
</dbReference>
<dbReference type="InterPro" id="IPR020479">
    <property type="entry name" value="HD_metazoa"/>
</dbReference>
<dbReference type="InterPro" id="IPR017970">
    <property type="entry name" value="Homeobox_CS"/>
</dbReference>
<dbReference type="InterPro" id="IPR009057">
    <property type="entry name" value="Homeodomain-like_sf"/>
</dbReference>
<dbReference type="InterPro" id="IPR000047">
    <property type="entry name" value="HTH_motif"/>
</dbReference>
<dbReference type="PANTHER" id="PTHR24341">
    <property type="entry name" value="HOMEOBOX PROTEIN ENGRAILED"/>
    <property type="match status" value="1"/>
</dbReference>
<dbReference type="PANTHER" id="PTHR24341:SF6">
    <property type="entry name" value="HOMEOBOX PROTEIN INVECTED"/>
    <property type="match status" value="1"/>
</dbReference>
<dbReference type="Pfam" id="PF00046">
    <property type="entry name" value="Homeodomain"/>
    <property type="match status" value="1"/>
</dbReference>
<dbReference type="PRINTS" id="PR00024">
    <property type="entry name" value="HOMEOBOX"/>
</dbReference>
<dbReference type="PRINTS" id="PR00031">
    <property type="entry name" value="HTHREPRESSR"/>
</dbReference>
<dbReference type="SMART" id="SM00389">
    <property type="entry name" value="HOX"/>
    <property type="match status" value="1"/>
</dbReference>
<dbReference type="SUPFAM" id="SSF46689">
    <property type="entry name" value="Homeodomain-like"/>
    <property type="match status" value="1"/>
</dbReference>
<dbReference type="PROSITE" id="PS00027">
    <property type="entry name" value="HOMEOBOX_1"/>
    <property type="match status" value="1"/>
</dbReference>
<dbReference type="PROSITE" id="PS50071">
    <property type="entry name" value="HOMEOBOX_2"/>
    <property type="match status" value="1"/>
</dbReference>
<keyword id="KW-0217">Developmental protein</keyword>
<keyword id="KW-0238">DNA-binding</keyword>
<keyword id="KW-0371">Homeobox</keyword>
<keyword id="KW-0539">Nucleus</keyword>
<proteinExistence type="inferred from homology"/>